<evidence type="ECO:0000255" key="1">
    <source>
        <dbReference type="HAMAP-Rule" id="MF_01606"/>
    </source>
</evidence>
<keyword id="KW-0963">Cytoplasm</keyword>
<keyword id="KW-0408">Iron</keyword>
<keyword id="KW-0479">Metal-binding</keyword>
<keyword id="KW-0346">Stress response</keyword>
<feature type="chain" id="PRO_1000215700" description="Iron-sulfur cluster repair protein YtfE">
    <location>
        <begin position="1"/>
        <end position="221"/>
    </location>
</feature>
<accession>C6DDN6</accession>
<dbReference type="EMBL" id="CP001657">
    <property type="protein sequence ID" value="ACT14443.1"/>
    <property type="molecule type" value="Genomic_DNA"/>
</dbReference>
<dbReference type="RefSeq" id="WP_015841572.1">
    <property type="nucleotide sequence ID" value="NC_012917.1"/>
</dbReference>
<dbReference type="SMR" id="C6DDN6"/>
<dbReference type="STRING" id="561230.PC1_3427"/>
<dbReference type="GeneID" id="67792700"/>
<dbReference type="KEGG" id="pct:PC1_3427"/>
<dbReference type="eggNOG" id="COG2846">
    <property type="taxonomic scope" value="Bacteria"/>
</dbReference>
<dbReference type="HOGENOM" id="CLU_076075_2_0_6"/>
<dbReference type="OrthoDB" id="9797132at2"/>
<dbReference type="Proteomes" id="UP000002736">
    <property type="component" value="Chromosome"/>
</dbReference>
<dbReference type="GO" id="GO:0005737">
    <property type="term" value="C:cytoplasm"/>
    <property type="evidence" value="ECO:0007669"/>
    <property type="project" value="UniProtKB-SubCell"/>
</dbReference>
<dbReference type="GO" id="GO:0046872">
    <property type="term" value="F:metal ion binding"/>
    <property type="evidence" value="ECO:0007669"/>
    <property type="project" value="UniProtKB-KW"/>
</dbReference>
<dbReference type="GO" id="GO:0030091">
    <property type="term" value="P:protein repair"/>
    <property type="evidence" value="ECO:0007669"/>
    <property type="project" value="UniProtKB-UniRule"/>
</dbReference>
<dbReference type="GO" id="GO:0051409">
    <property type="term" value="P:response to nitrosative stress"/>
    <property type="evidence" value="ECO:0007669"/>
    <property type="project" value="UniProtKB-UniRule"/>
</dbReference>
<dbReference type="GO" id="GO:0006979">
    <property type="term" value="P:response to oxidative stress"/>
    <property type="evidence" value="ECO:0007669"/>
    <property type="project" value="UniProtKB-UniRule"/>
</dbReference>
<dbReference type="Gene3D" id="1.20.120.520">
    <property type="entry name" value="nmb1532 protein domain like"/>
    <property type="match status" value="1"/>
</dbReference>
<dbReference type="HAMAP" id="MF_01606">
    <property type="entry name" value="RIC_YtfE"/>
    <property type="match status" value="1"/>
</dbReference>
<dbReference type="InterPro" id="IPR023742">
    <property type="entry name" value="FeS-repair_YftE"/>
</dbReference>
<dbReference type="InterPro" id="IPR012312">
    <property type="entry name" value="Hemerythrin-like"/>
</dbReference>
<dbReference type="InterPro" id="IPR019903">
    <property type="entry name" value="RIC_family"/>
</dbReference>
<dbReference type="NCBIfam" id="TIGR03652">
    <property type="entry name" value="FeS_repair_RIC"/>
    <property type="match status" value="1"/>
</dbReference>
<dbReference type="NCBIfam" id="NF008221">
    <property type="entry name" value="PRK10992.1"/>
    <property type="match status" value="1"/>
</dbReference>
<dbReference type="PANTHER" id="PTHR36438">
    <property type="entry name" value="IRON-SULFUR CLUSTER REPAIR PROTEIN YTFE"/>
    <property type="match status" value="1"/>
</dbReference>
<dbReference type="PANTHER" id="PTHR36438:SF1">
    <property type="entry name" value="IRON-SULFUR CLUSTER REPAIR PROTEIN YTFE"/>
    <property type="match status" value="1"/>
</dbReference>
<dbReference type="Pfam" id="PF01814">
    <property type="entry name" value="Hemerythrin"/>
    <property type="match status" value="1"/>
</dbReference>
<dbReference type="Pfam" id="PF04405">
    <property type="entry name" value="ScdA_N"/>
    <property type="match status" value="1"/>
</dbReference>
<comment type="function">
    <text evidence="1">Di-iron-containing protein involved in the repair of iron-sulfur clusters damaged by oxidative and nitrosative stress conditions.</text>
</comment>
<comment type="subunit">
    <text evidence="1">Homodimer.</text>
</comment>
<comment type="subcellular location">
    <subcellularLocation>
        <location evidence="1">Cytoplasm</location>
    </subcellularLocation>
</comment>
<comment type="similarity">
    <text evidence="1">Belongs to the RIC family. YtfE subfamily.</text>
</comment>
<sequence>MAYRDQSLGELAIAIPRATKLFRELNLDFCCGGKQTLSRAAGKKDLNIDELEAQLEKLAAQPSDARDWREAPLADIIAYIIPRFHDRHREQLPELILMAEKVERVHHDKADCPHGLANQLTAIYNELSQHMMKEERILFPMIGQGMGANAAAPISVMEHEHDDAGRDVEVVKELTHGVVPPEGACNTWRALYSGINEFITDLMEHIHLENNLLFPRALRGE</sequence>
<name>YTFE_PECCP</name>
<reference key="1">
    <citation type="submission" date="2009-07" db="EMBL/GenBank/DDBJ databases">
        <title>Complete sequence of Pectobacterium carotovorum subsp. carotovorum PC1.</title>
        <authorList>
            <consortium name="US DOE Joint Genome Institute"/>
            <person name="Lucas S."/>
            <person name="Copeland A."/>
            <person name="Lapidus A."/>
            <person name="Glavina del Rio T."/>
            <person name="Tice H."/>
            <person name="Bruce D."/>
            <person name="Goodwin L."/>
            <person name="Pitluck S."/>
            <person name="Munk A.C."/>
            <person name="Brettin T."/>
            <person name="Detter J.C."/>
            <person name="Han C."/>
            <person name="Tapia R."/>
            <person name="Larimer F."/>
            <person name="Land M."/>
            <person name="Hauser L."/>
            <person name="Kyrpides N."/>
            <person name="Mikhailova N."/>
            <person name="Balakrishnan V."/>
            <person name="Glasner J."/>
            <person name="Perna N.T."/>
        </authorList>
    </citation>
    <scope>NUCLEOTIDE SEQUENCE [LARGE SCALE GENOMIC DNA]</scope>
    <source>
        <strain>PC1</strain>
    </source>
</reference>
<proteinExistence type="inferred from homology"/>
<gene>
    <name evidence="1" type="primary">ytfE</name>
    <name type="ordered locus">PC1_3427</name>
</gene>
<organism>
    <name type="scientific">Pectobacterium carotovorum subsp. carotovorum (strain PC1)</name>
    <dbReference type="NCBI Taxonomy" id="561230"/>
    <lineage>
        <taxon>Bacteria</taxon>
        <taxon>Pseudomonadati</taxon>
        <taxon>Pseudomonadota</taxon>
        <taxon>Gammaproteobacteria</taxon>
        <taxon>Enterobacterales</taxon>
        <taxon>Pectobacteriaceae</taxon>
        <taxon>Pectobacterium</taxon>
    </lineage>
</organism>
<protein>
    <recommendedName>
        <fullName evidence="1">Iron-sulfur cluster repair protein YtfE</fullName>
    </recommendedName>
</protein>